<sequence length="403" mass="46073">MSQCTVEYNVSEITEYVLSTLGERCQSAGIVIPTVIIYGTIFLLGLFGNICTCIVIAANKSMHNPTNYYLFSLAVSDIIALILGLPMEFYQSLDYSYPYRFSEGICKARAFLIEFTSYASIMIICCFSFERWLAICHPLRSKIFSTLWRANVLIILAWTISFVCALPIAFIVQINKLPLPEDAKYQPWTNKVSTDGIFVLHTEFCAMNQSRPDQQKMIIIFAFTVFFVIPAIAIVIMYAHIAVQLESSEIDLKGDKMVKKRRNKSNRTVLKMLLSVVITFFICWLPFHIQRLLSVYTTWSETTTISPPVQFLSMIVFYISGFCYYSNSAANPILYNILSQKYRSAFCRTILGDHIANFVFKGHQRPGQSKRCSSSTEAEQRTLMTRGSVRVDKPHRKLEVHNY</sequence>
<accession>O17239</accession>
<name>NMUR2_CAEEL</name>
<organism evidence="5">
    <name type="scientific">Caenorhabditis elegans</name>
    <dbReference type="NCBI Taxonomy" id="6239"/>
    <lineage>
        <taxon>Eukaryota</taxon>
        <taxon>Metazoa</taxon>
        <taxon>Ecdysozoa</taxon>
        <taxon>Nematoda</taxon>
        <taxon>Chromadorea</taxon>
        <taxon>Rhabditida</taxon>
        <taxon>Rhabditina</taxon>
        <taxon>Rhabditomorpha</taxon>
        <taxon>Rhabditoidea</taxon>
        <taxon>Rhabditidae</taxon>
        <taxon>Peloderinae</taxon>
        <taxon>Caenorhabditis</taxon>
    </lineage>
</organism>
<protein>
    <recommendedName>
        <fullName evidence="6">Neuromedin U receptor homolog nmur-2</fullName>
    </recommendedName>
    <alternativeName>
        <fullName evidence="3">Pyrokinin receptor homolog</fullName>
        <shortName evidence="3">CAPA-PK receptor</shortName>
        <shortName evidence="3">PK receptor homolog</shortName>
        <shortName evidence="3">PK-R</shortName>
    </alternativeName>
</protein>
<proteinExistence type="inferred from homology"/>
<reference evidence="5" key="1">
    <citation type="journal article" date="1998" name="Science">
        <title>Genome sequence of the nematode C. elegans: a platform for investigating biology.</title>
        <authorList>
            <consortium name="The C. elegans sequencing consortium"/>
        </authorList>
    </citation>
    <scope>NUCLEOTIDE SEQUENCE [LARGE SCALE GENOMIC DNA]</scope>
    <source>
        <strain evidence="5">Bristol N2</strain>
    </source>
</reference>
<reference evidence="4" key="2">
    <citation type="journal article" date="2009" name="Biochem. Biophys. Res. Commun.">
        <title>A neuromedin-pyrokinin-like neuropeptide signaling system in Caenorhabditis elegans.</title>
        <authorList>
            <person name="Lindemans M."/>
            <person name="Janssen T."/>
            <person name="Husson S.J."/>
            <person name="Meelkop E."/>
            <person name="Temmerman L."/>
            <person name="Clynen E."/>
            <person name="Mertens I."/>
            <person name="Schoofs L."/>
        </authorList>
    </citation>
    <scope>FUNCTION</scope>
</reference>
<gene>
    <name evidence="6" type="primary">nmur-2</name>
    <name evidence="6" type="ORF">K10B4.4</name>
</gene>
<feature type="chain" id="PRO_0000458219" description="Neuromedin U receptor homolog nmur-2">
    <location>
        <begin position="1"/>
        <end position="403"/>
    </location>
</feature>
<feature type="topological domain" description="Extracellular" evidence="4">
    <location>
        <begin position="1"/>
        <end position="27"/>
    </location>
</feature>
<feature type="transmembrane region" description="Helical" evidence="1">
    <location>
        <begin position="28"/>
        <end position="48"/>
    </location>
</feature>
<feature type="topological domain" description="Cytoplasmic" evidence="4">
    <location>
        <begin position="49"/>
        <end position="68"/>
    </location>
</feature>
<feature type="transmembrane region" description="Helical" evidence="1">
    <location>
        <begin position="69"/>
        <end position="89"/>
    </location>
</feature>
<feature type="topological domain" description="Extracellular" evidence="4">
    <location>
        <begin position="90"/>
        <end position="109"/>
    </location>
</feature>
<feature type="transmembrane region" description="Helical" evidence="1">
    <location>
        <begin position="110"/>
        <end position="130"/>
    </location>
</feature>
<feature type="topological domain" description="Cytoplasmic" evidence="4">
    <location>
        <begin position="131"/>
        <end position="151"/>
    </location>
</feature>
<feature type="transmembrane region" description="Helical" evidence="1">
    <location>
        <begin position="152"/>
        <end position="172"/>
    </location>
</feature>
<feature type="topological domain" description="Extracellular" evidence="4">
    <location>
        <begin position="173"/>
        <end position="216"/>
    </location>
</feature>
<feature type="transmembrane region" description="Helical" evidence="1">
    <location>
        <begin position="217"/>
        <end position="237"/>
    </location>
</feature>
<feature type="topological domain" description="Cytoplasmic" evidence="4">
    <location>
        <begin position="238"/>
        <end position="268"/>
    </location>
</feature>
<feature type="transmembrane region" description="Helical" evidence="1">
    <location>
        <begin position="269"/>
        <end position="289"/>
    </location>
</feature>
<feature type="topological domain" description="Extracellular" evidence="4">
    <location>
        <begin position="290"/>
        <end position="304"/>
    </location>
</feature>
<feature type="transmembrane region" description="Helical" evidence="1">
    <location>
        <begin position="305"/>
        <end position="325"/>
    </location>
</feature>
<feature type="topological domain" description="Cytoplasmic" evidence="4">
    <location>
        <begin position="326"/>
        <end position="403"/>
    </location>
</feature>
<comment type="function">
    <text evidence="2">Putative G protein-coupled receptor for pyrokinin-like neuropeptide derived from the processing of the neuropeptide precursor capa-1.</text>
</comment>
<comment type="subcellular location">
    <subcellularLocation>
        <location evidence="1">Membrane</location>
        <topology evidence="1">Multi-pass membrane protein</topology>
    </subcellularLocation>
</comment>
<comment type="similarity">
    <text evidence="4">Belongs to the G-protein coupled receptor 1 family.</text>
</comment>
<evidence type="ECO:0000255" key="1"/>
<evidence type="ECO:0000269" key="2">
    <source>
    </source>
</evidence>
<evidence type="ECO:0000303" key="3">
    <source>
    </source>
</evidence>
<evidence type="ECO:0000305" key="4"/>
<evidence type="ECO:0000312" key="5">
    <source>
        <dbReference type="Proteomes" id="UP000001940"/>
    </source>
</evidence>
<evidence type="ECO:0000312" key="6">
    <source>
        <dbReference type="WormBase" id="K10B4.4"/>
    </source>
</evidence>
<dbReference type="EMBL" id="BX284602">
    <property type="protein sequence ID" value="CCD67735.1"/>
    <property type="molecule type" value="Genomic_DNA"/>
</dbReference>
<dbReference type="PIR" id="A88013">
    <property type="entry name" value="A88013"/>
</dbReference>
<dbReference type="RefSeq" id="NP_493666.2">
    <property type="nucleotide sequence ID" value="NM_061265.4"/>
</dbReference>
<dbReference type="SMR" id="O17239"/>
<dbReference type="DIP" id="DIP-27398N"/>
<dbReference type="FunCoup" id="O17239">
    <property type="interactions" value="107"/>
</dbReference>
<dbReference type="STRING" id="6239.K10B4.4.1"/>
<dbReference type="PaxDb" id="6239-K10B4.4"/>
<dbReference type="EnsemblMetazoa" id="K10B4.4.1">
    <property type="protein sequence ID" value="K10B4.4.1"/>
    <property type="gene ID" value="WBGene00019616"/>
</dbReference>
<dbReference type="GeneID" id="173398"/>
<dbReference type="KEGG" id="cel:CELE_K10B4.4"/>
<dbReference type="UCSC" id="K10B4.4">
    <property type="organism name" value="c. elegans"/>
</dbReference>
<dbReference type="AGR" id="WB:WBGene00019616"/>
<dbReference type="CTD" id="173398"/>
<dbReference type="WormBase" id="K10B4.4">
    <property type="protein sequence ID" value="CE38395"/>
    <property type="gene ID" value="WBGene00019616"/>
    <property type="gene designation" value="nmur-2"/>
</dbReference>
<dbReference type="eggNOG" id="KOG3656">
    <property type="taxonomic scope" value="Eukaryota"/>
</dbReference>
<dbReference type="GeneTree" id="ENSGT01120000271823"/>
<dbReference type="HOGENOM" id="CLU_009579_6_5_1"/>
<dbReference type="InParanoid" id="O17239"/>
<dbReference type="OMA" id="QLHVPCR"/>
<dbReference type="OrthoDB" id="5962705at2759"/>
<dbReference type="PhylomeDB" id="O17239"/>
<dbReference type="Reactome" id="R-CEL-416476">
    <property type="pathway name" value="G alpha (q) signalling events"/>
</dbReference>
<dbReference type="PRO" id="PR:O17239"/>
<dbReference type="Proteomes" id="UP000001940">
    <property type="component" value="Chromosome II"/>
</dbReference>
<dbReference type="Bgee" id="WBGene00019616">
    <property type="expression patterns" value="Expressed in larva"/>
</dbReference>
<dbReference type="GO" id="GO:0005886">
    <property type="term" value="C:plasma membrane"/>
    <property type="evidence" value="ECO:0000318"/>
    <property type="project" value="GO_Central"/>
</dbReference>
<dbReference type="GO" id="GO:0008188">
    <property type="term" value="F:neuropeptide receptor activity"/>
    <property type="evidence" value="ECO:0000314"/>
    <property type="project" value="WormBase"/>
</dbReference>
<dbReference type="GO" id="GO:0007218">
    <property type="term" value="P:neuropeptide signaling pathway"/>
    <property type="evidence" value="ECO:0000314"/>
    <property type="project" value="WormBase"/>
</dbReference>
<dbReference type="CDD" id="cd15134">
    <property type="entry name" value="7tmA_capaR"/>
    <property type="match status" value="1"/>
</dbReference>
<dbReference type="Gene3D" id="1.20.1070.10">
    <property type="entry name" value="Rhodopsin 7-helix transmembrane proteins"/>
    <property type="match status" value="1"/>
</dbReference>
<dbReference type="InterPro" id="IPR000276">
    <property type="entry name" value="GPCR_Rhodpsn"/>
</dbReference>
<dbReference type="InterPro" id="IPR017452">
    <property type="entry name" value="GPCR_Rhodpsn_7TM"/>
</dbReference>
<dbReference type="PANTHER" id="PTHR24243">
    <property type="entry name" value="G-PROTEIN COUPLED RECEPTOR"/>
    <property type="match status" value="1"/>
</dbReference>
<dbReference type="PANTHER" id="PTHR24243:SF208">
    <property type="entry name" value="PYROKININ-1 RECEPTOR"/>
    <property type="match status" value="1"/>
</dbReference>
<dbReference type="Pfam" id="PF00001">
    <property type="entry name" value="7tm_1"/>
    <property type="match status" value="1"/>
</dbReference>
<dbReference type="PRINTS" id="PR00237">
    <property type="entry name" value="GPCRRHODOPSN"/>
</dbReference>
<dbReference type="SMART" id="SM01381">
    <property type="entry name" value="7TM_GPCR_Srsx"/>
    <property type="match status" value="1"/>
</dbReference>
<dbReference type="SUPFAM" id="SSF81321">
    <property type="entry name" value="Family A G protein-coupled receptor-like"/>
    <property type="match status" value="1"/>
</dbReference>
<dbReference type="PROSITE" id="PS00237">
    <property type="entry name" value="G_PROTEIN_RECEP_F1_1"/>
    <property type="match status" value="1"/>
</dbReference>
<dbReference type="PROSITE" id="PS50262">
    <property type="entry name" value="G_PROTEIN_RECEP_F1_2"/>
    <property type="match status" value="1"/>
</dbReference>
<keyword id="KW-0297">G-protein coupled receptor</keyword>
<keyword id="KW-0472">Membrane</keyword>
<keyword id="KW-0675">Receptor</keyword>
<keyword id="KW-1185">Reference proteome</keyword>
<keyword id="KW-0807">Transducer</keyword>
<keyword id="KW-0812">Transmembrane</keyword>
<keyword id="KW-1133">Transmembrane helix</keyword>